<keyword id="KW-0051">Antiviral defense</keyword>
<keyword id="KW-0963">Cytoplasm</keyword>
<keyword id="KW-0378">Hydrolase</keyword>
<keyword id="KW-0520">NAD</keyword>
<keyword id="KW-1185">Reference proteome</keyword>
<evidence type="ECO:0000250" key="1">
    <source>
        <dbReference type="UniProtKB" id="A0A009IHW8"/>
    </source>
</evidence>
<evidence type="ECO:0000250" key="2">
    <source>
        <dbReference type="UniProtKB" id="J8CSK2"/>
    </source>
</evidence>
<evidence type="ECO:0000269" key="3">
    <source>
    </source>
</evidence>
<evidence type="ECO:0000303" key="4">
    <source>
    </source>
</evidence>
<evidence type="ECO:0000305" key="5"/>
<evidence type="ECO:0000305" key="6">
    <source>
    </source>
</evidence>
<evidence type="ECO:0000312" key="7">
    <source>
        <dbReference type="EMBL" id="QED46886.1"/>
    </source>
</evidence>
<dbReference type="EC" id="3.2.2.-" evidence="2"/>
<dbReference type="EMBL" id="CP042593">
    <property type="protein sequence ID" value="QED46886.1"/>
    <property type="molecule type" value="Genomic_DNA"/>
</dbReference>
<dbReference type="RefSeq" id="WP_057775115.1">
    <property type="nucleotide sequence ID" value="NZ_CP042593.1"/>
</dbReference>
<dbReference type="STRING" id="1742359.GCA_001439625_04134"/>
<dbReference type="KEGG" id="bda:FSZ17_06165"/>
<dbReference type="OrthoDB" id="9798540at2"/>
<dbReference type="Proteomes" id="UP000321555">
    <property type="component" value="Chromosome"/>
</dbReference>
<dbReference type="GO" id="GO:0005737">
    <property type="term" value="C:cytoplasm"/>
    <property type="evidence" value="ECO:0007669"/>
    <property type="project" value="UniProtKB-SubCell"/>
</dbReference>
<dbReference type="GO" id="GO:0016787">
    <property type="term" value="F:hydrolase activity"/>
    <property type="evidence" value="ECO:0007669"/>
    <property type="project" value="UniProtKB-KW"/>
</dbReference>
<dbReference type="GO" id="GO:0051607">
    <property type="term" value="P:defense response to virus"/>
    <property type="evidence" value="ECO:0007669"/>
    <property type="project" value="UniProtKB-KW"/>
</dbReference>
<dbReference type="InterPro" id="IPR015032">
    <property type="entry name" value="ThsB__TIR-like_domain"/>
</dbReference>
<dbReference type="Pfam" id="PF08937">
    <property type="entry name" value="ThsB_TIR"/>
    <property type="match status" value="1"/>
</dbReference>
<protein>
    <recommendedName>
        <fullName evidence="5">Putative cyclic ADP-D-ribose synthase TIR1</fullName>
        <shortName evidence="5">Putative cADPR synthase TIR1</shortName>
        <ecNumber evidence="2">3.2.2.-</ecNumber>
    </recommendedName>
    <alternativeName>
        <fullName evidence="4">Thoeris protein TIR1</fullName>
    </alternativeName>
</protein>
<reference evidence="7" key="1">
    <citation type="submission" date="2019-08" db="EMBL/GenBank/DDBJ databases">
        <authorList>
            <person name="Zheng X."/>
        </authorList>
    </citation>
    <scope>NUCLEOTIDE SEQUENCE [LARGE SCALE GENOMIC DNA]</scope>
    <source>
        <strain>KCTC 43120 / FJAT-25496</strain>
    </source>
</reference>
<reference key="2">
    <citation type="journal article" date="2021" name="Nature">
        <title>Antiviral activity of bacterial TIR domains via immune signalling molecules.</title>
        <authorList>
            <person name="Ofir G."/>
            <person name="Herbst E."/>
            <person name="Baroz M."/>
            <person name="Cohen D."/>
            <person name="Millman A."/>
            <person name="Doron S."/>
            <person name="Tal N."/>
            <person name="Malheiro D.B.A."/>
            <person name="Malitsky S."/>
            <person name="Amitai G."/>
            <person name="Sorek R."/>
        </authorList>
    </citation>
    <scope>FUNCTION IN ANTIVIRAL DEFENSE</scope>
    <scope>FUNCTION</scope>
    <scope>ACTIVITY REGULATION</scope>
    <scope>EXPRESSION IN B.SUBTILIS</scope>
    <source>
        <strain>KCTC 43120 / FJAT-25496</strain>
    </source>
</reference>
<feature type="chain" id="PRO_0000456261" description="Putative cyclic ADP-D-ribose synthase TIR1">
    <location>
        <begin position="1"/>
        <end position="224"/>
    </location>
</feature>
<proteinExistence type="evidence at protein level"/>
<comment type="function">
    <text evidence="2 3">One of 2 TIR-like protein components of the Thoeris antiviral defense system, composed of ThsA, TIR1 (thsB1) and TIR2 (thsB2). Phage infection activates this protein; by 70 minutes post-infection with phage SPO1, TIR1 generates a signal molecule that activates the NAD(+) hydrolase activity of ThsA (tested with B.cereus). The signal is similar to cyclic ADP-D-ribose, but how it differs is unknown. Expression of Thoeris in B.subtilis (strain BEST7003) confers resistance to phages phi29, phi3T, SPBeta, SBSphi11, SBSphi13, SBSphiJ, SPO1 and SPR but not SBSphiC. The TIR paralogs confer resistance to different phages; this subunit confers resistance to phi29, SBSphi11, SBSphi13, SBSphiJ, SPO1 and SPR but not phi3T, SBSphiC or SPBeta. There is overlap in the phage range for this system, both TIR1 and TIR2 are activated by SBSphi13, SBSphiJ, SPO1 and SPR. Probably hydrolyzes NAD(+) to make a cyclic ADP-D-ribose (cADPR) signaling molecule; might make 3'cADPR (By similarity).</text>
</comment>
<comment type="activity regulation">
    <text evidence="6">Activated upon phage infection.</text>
</comment>
<comment type="subunit">
    <text evidence="1">Homodimer.</text>
</comment>
<comment type="subcellular location">
    <subcellularLocation>
        <location evidence="5">Cytoplasm</location>
    </subcellularLocation>
</comment>
<comment type="similarity">
    <text evidence="5">Belongs to the Thoeris B TIR-like family.</text>
</comment>
<accession>A0A5B8Z670</accession>
<name>THSB1_CYTDA</name>
<sequence>MGRKIFISYKYSDSGVYPLNGNYSTTVRDYVDELQSKLKEGDHINKGEADGEDLSEFKDETIWTKLKDKIFDSSITIIFISKNMKALFQSEEDQWIPWEISYSLRELTRNGRTSGANALLAVVLPDQYNSYEYFIHDNSCPYCNCITLKTNTLFTILRENMFNIKSPTYNDCSNHSESNKVYTGESSYVRSVKWVDFIDNFDIYLQVAYNINENKDEYTLHKSV</sequence>
<organism>
    <name type="scientific">Cytobacillus dafuensis</name>
    <name type="common">Bacillus dafuensis</name>
    <dbReference type="NCBI Taxonomy" id="1742359"/>
    <lineage>
        <taxon>Bacteria</taxon>
        <taxon>Bacillati</taxon>
        <taxon>Bacillota</taxon>
        <taxon>Bacilli</taxon>
        <taxon>Bacillales</taxon>
        <taxon>Bacillaceae</taxon>
        <taxon>Cytobacillus</taxon>
    </lineage>
</organism>
<gene>
    <name evidence="5" type="primary">thsB1</name>
    <name evidence="7" type="ORF">FSZ17_06165</name>
</gene>